<dbReference type="EMBL" id="M32789">
    <property type="protein sequence ID" value="AAA46456.1"/>
    <property type="molecule type" value="Genomic_RNA"/>
</dbReference>
<dbReference type="EMBL" id="S51114">
    <property type="protein sequence ID" value="AAB19590.1"/>
    <property type="molecule type" value="Genomic_RNA"/>
</dbReference>
<dbReference type="PIR" id="A33748">
    <property type="entry name" value="VGIHJ2"/>
</dbReference>
<dbReference type="SMR" id="P22432"/>
<dbReference type="GlyCosmos" id="P22432">
    <property type="glycosylation" value="19 sites, No reported glycans"/>
</dbReference>
<dbReference type="GO" id="GO:0044173">
    <property type="term" value="C:host cell endoplasmic reticulum-Golgi intermediate compartment membrane"/>
    <property type="evidence" value="ECO:0007669"/>
    <property type="project" value="UniProtKB-SubCell"/>
</dbReference>
<dbReference type="GO" id="GO:0020002">
    <property type="term" value="C:host cell plasma membrane"/>
    <property type="evidence" value="ECO:0007669"/>
    <property type="project" value="UniProtKB-SubCell"/>
</dbReference>
<dbReference type="GO" id="GO:0016020">
    <property type="term" value="C:membrane"/>
    <property type="evidence" value="ECO:0007669"/>
    <property type="project" value="UniProtKB-UniRule"/>
</dbReference>
<dbReference type="GO" id="GO:0019031">
    <property type="term" value="C:viral envelope"/>
    <property type="evidence" value="ECO:0007669"/>
    <property type="project" value="UniProtKB-UniRule"/>
</dbReference>
<dbReference type="GO" id="GO:0055036">
    <property type="term" value="C:virion membrane"/>
    <property type="evidence" value="ECO:0007669"/>
    <property type="project" value="UniProtKB-SubCell"/>
</dbReference>
<dbReference type="GO" id="GO:0075509">
    <property type="term" value="P:endocytosis involved in viral entry into host cell"/>
    <property type="evidence" value="ECO:0007669"/>
    <property type="project" value="UniProtKB-UniRule"/>
</dbReference>
<dbReference type="GO" id="GO:0039654">
    <property type="term" value="P:fusion of virus membrane with host endosome membrane"/>
    <property type="evidence" value="ECO:0007669"/>
    <property type="project" value="UniProtKB-UniRule"/>
</dbReference>
<dbReference type="GO" id="GO:0019064">
    <property type="term" value="P:fusion of virus membrane with host plasma membrane"/>
    <property type="evidence" value="ECO:0007669"/>
    <property type="project" value="UniProtKB-UniRule"/>
</dbReference>
<dbReference type="GO" id="GO:0046813">
    <property type="term" value="P:receptor-mediated virion attachment to host cell"/>
    <property type="evidence" value="ECO:0007669"/>
    <property type="project" value="UniProtKB-UniRule"/>
</dbReference>
<dbReference type="CDD" id="cd22380">
    <property type="entry name" value="HKU1-CoV-like_Spike_SD1-2_S1-S2_S2"/>
    <property type="match status" value="1"/>
</dbReference>
<dbReference type="CDD" id="cd21625">
    <property type="entry name" value="MHV-like_Spike_S1_NTD"/>
    <property type="match status" value="1"/>
</dbReference>
<dbReference type="CDD" id="cd21484">
    <property type="entry name" value="MHV-like_Spike_S1_RBD"/>
    <property type="match status" value="1"/>
</dbReference>
<dbReference type="FunFam" id="1.20.5.300:FF:000003">
    <property type="entry name" value="Spike glycoprotein"/>
    <property type="match status" value="1"/>
</dbReference>
<dbReference type="FunFam" id="1.20.5.300:FF:000006">
    <property type="entry name" value="Spike glycoprotein"/>
    <property type="match status" value="1"/>
</dbReference>
<dbReference type="FunFam" id="2.60.120.960:FF:000002">
    <property type="entry name" value="Spike glycoprotein"/>
    <property type="match status" value="1"/>
</dbReference>
<dbReference type="Gene3D" id="1.20.5.300">
    <property type="match status" value="2"/>
</dbReference>
<dbReference type="Gene3D" id="3.30.70.1840">
    <property type="match status" value="1"/>
</dbReference>
<dbReference type="Gene3D" id="2.60.120.960">
    <property type="entry name" value="Spike glycoprotein, N-terminal domain"/>
    <property type="match status" value="1"/>
</dbReference>
<dbReference type="HAMAP" id="MF_04099">
    <property type="entry name" value="BETA_CORONA_SPIKE"/>
    <property type="match status" value="1"/>
</dbReference>
<dbReference type="InterPro" id="IPR032500">
    <property type="entry name" value="bCoV_S1_N"/>
</dbReference>
<dbReference type="InterPro" id="IPR042578">
    <property type="entry name" value="BETA_CORONA_SPIKE"/>
</dbReference>
<dbReference type="InterPro" id="IPR043607">
    <property type="entry name" value="CoV_S1_C"/>
</dbReference>
<dbReference type="InterPro" id="IPR043473">
    <property type="entry name" value="S2_sf_CoV"/>
</dbReference>
<dbReference type="InterPro" id="IPR043002">
    <property type="entry name" value="Spike_N_sf"/>
</dbReference>
<dbReference type="InterPro" id="IPR044339">
    <property type="entry name" value="Spike_S1_NTD_MHV-like"/>
</dbReference>
<dbReference type="InterPro" id="IPR018548">
    <property type="entry name" value="Spike_S1_RBD_bCoV"/>
</dbReference>
<dbReference type="InterPro" id="IPR036326">
    <property type="entry name" value="Spike_S1_RBD_sf_bCoV"/>
</dbReference>
<dbReference type="InterPro" id="IPR002552">
    <property type="entry name" value="Spike_S2_CoV"/>
</dbReference>
<dbReference type="InterPro" id="IPR043614">
    <property type="entry name" value="Spike_S2_CoV_C"/>
</dbReference>
<dbReference type="InterPro" id="IPR044873">
    <property type="entry name" value="Spike_S2_CoV_HR1"/>
</dbReference>
<dbReference type="InterPro" id="IPR044874">
    <property type="entry name" value="Spike_S2_CoV_HR2"/>
</dbReference>
<dbReference type="Pfam" id="PF16451">
    <property type="entry name" value="bCoV_S1_N"/>
    <property type="match status" value="1"/>
</dbReference>
<dbReference type="Pfam" id="PF09408">
    <property type="entry name" value="bCoV_S1_RBD"/>
    <property type="match status" value="1"/>
</dbReference>
<dbReference type="Pfam" id="PF19209">
    <property type="entry name" value="CoV_S1_C"/>
    <property type="match status" value="1"/>
</dbReference>
<dbReference type="Pfam" id="PF01601">
    <property type="entry name" value="CoV_S2"/>
    <property type="match status" value="1"/>
</dbReference>
<dbReference type="Pfam" id="PF19214">
    <property type="entry name" value="CoV_S2_C"/>
    <property type="match status" value="1"/>
</dbReference>
<dbReference type="SUPFAM" id="SSF111474">
    <property type="entry name" value="Coronavirus S2 glycoprotein"/>
    <property type="match status" value="2"/>
</dbReference>
<dbReference type="SUPFAM" id="SSF143587">
    <property type="entry name" value="SARS receptor-binding domain-like"/>
    <property type="match status" value="1"/>
</dbReference>
<dbReference type="PROSITE" id="PS51921">
    <property type="entry name" value="BCOV_S1_CTD"/>
    <property type="match status" value="1"/>
</dbReference>
<dbReference type="PROSITE" id="PS51922">
    <property type="entry name" value="BCOV_S1_NTD"/>
    <property type="match status" value="1"/>
</dbReference>
<dbReference type="PROSITE" id="PS51923">
    <property type="entry name" value="COV_S2_HR1"/>
    <property type="match status" value="1"/>
</dbReference>
<dbReference type="PROSITE" id="PS51924">
    <property type="entry name" value="COV_S2_HR2"/>
    <property type="match status" value="1"/>
</dbReference>
<name>SPIKE_CVM4</name>
<proteinExistence type="inferred from homology"/>
<protein>
    <recommendedName>
        <fullName evidence="2">Spike glycoprotein</fullName>
        <shortName evidence="2">S glycoprotein</shortName>
    </recommendedName>
    <alternativeName>
        <fullName evidence="2">E2</fullName>
    </alternativeName>
    <alternativeName>
        <fullName evidence="2">Peplomer protein</fullName>
    </alternativeName>
    <component>
        <recommendedName>
            <fullName evidence="2">Spike protein S1</fullName>
        </recommendedName>
    </component>
    <component>
        <recommendedName>
            <fullName evidence="2">Spike protein S2</fullName>
        </recommendedName>
    </component>
    <component>
        <recommendedName>
            <fullName evidence="2">Spike protein S2'</fullName>
        </recommendedName>
    </component>
</protein>
<gene>
    <name evidence="2" type="primary">S</name>
    <name type="ORF">3</name>
</gene>
<feature type="signal peptide" evidence="2">
    <location>
        <begin position="1"/>
        <end position="13"/>
    </location>
</feature>
<feature type="chain" id="PRO_0000037211" description="Spike glycoprotein">
    <location>
        <begin position="14"/>
        <end position="1376"/>
    </location>
</feature>
<feature type="chain" id="PRO_0000037212" description="Spike protein S1">
    <location>
        <begin position="14"/>
        <end position="769"/>
    </location>
</feature>
<feature type="chain" id="PRO_0000037213" description="Spike protein S2">
    <location>
        <begin position="770"/>
        <end position="1376"/>
    </location>
</feature>
<feature type="chain" id="PRO_0000444083" description="Spike protein S2'" evidence="2">
    <location>
        <begin position="922"/>
        <end position="1376"/>
    </location>
</feature>
<feature type="topological domain" description="Extracellular" evidence="2">
    <location>
        <begin position="14"/>
        <end position="1317"/>
    </location>
</feature>
<feature type="transmembrane region" description="Helical" evidence="2">
    <location>
        <begin position="1318"/>
        <end position="1338"/>
    </location>
</feature>
<feature type="topological domain" description="Cytoplasmic" evidence="2">
    <location>
        <begin position="1339"/>
        <end position="1376"/>
    </location>
</feature>
<feature type="domain" description="BetaCoV S1-NTD" evidence="4">
    <location>
        <begin position="15"/>
        <end position="296"/>
    </location>
</feature>
<feature type="domain" description="BetaCoV S1-CTD" evidence="3">
    <location>
        <begin position="327"/>
        <end position="618"/>
    </location>
</feature>
<feature type="region of interest" description="Receptor binding site">
    <location>
        <begin position="15"/>
        <end position="330"/>
    </location>
</feature>
<feature type="region of interest" description="Important for the neurovirulence">
    <location>
        <begin position="429"/>
        <end position="599"/>
    </location>
</feature>
<feature type="region of interest" description="Fusion peptide 1" evidence="2">
    <location>
        <begin position="922"/>
        <end position="943"/>
    </location>
</feature>
<feature type="region of interest" description="Fusion peptide 2" evidence="2">
    <location>
        <begin position="941"/>
        <end position="961"/>
    </location>
</feature>
<feature type="region of interest" description="Heptad repeat 1" evidence="2">
    <location>
        <begin position="1022"/>
        <end position="1072"/>
    </location>
</feature>
<feature type="region of interest" description="Heptad repeat 2" evidence="2">
    <location>
        <begin position="1266"/>
        <end position="1306"/>
    </location>
</feature>
<feature type="coiled-coil region" evidence="2">
    <location>
        <begin position="1051"/>
        <end position="1095"/>
    </location>
</feature>
<feature type="coiled-coil region" evidence="2">
    <location>
        <begin position="1279"/>
        <end position="1307"/>
    </location>
</feature>
<feature type="short sequence motif" description="KxHxx" evidence="2">
    <location>
        <begin position="1372"/>
        <end position="1376"/>
    </location>
</feature>
<feature type="site" description="Cleavage; by host" evidence="1">
    <location>
        <begin position="769"/>
        <end position="770"/>
    </location>
</feature>
<feature type="site" description="Cleavage" evidence="2">
    <location>
        <begin position="921"/>
        <end position="922"/>
    </location>
</feature>
<feature type="glycosylation site" description="N-linked (GlcNAc...) asparagine; by host" evidence="2">
    <location>
        <position position="31"/>
    </location>
</feature>
<feature type="glycosylation site" description="N-linked (GlcNAc...) asparagine; by host" evidence="2">
    <location>
        <position position="60"/>
    </location>
</feature>
<feature type="glycosylation site" description="N-linked (GlcNAc...) asparagine; by host" evidence="2">
    <location>
        <position position="134"/>
    </location>
</feature>
<feature type="glycosylation site" description="N-linked (GlcNAc...) asparagine; by host" evidence="2">
    <location>
        <position position="192"/>
    </location>
</feature>
<feature type="glycosylation site" description="N-linked (GlcNAc...) asparagine; by host" evidence="2">
    <location>
        <position position="357"/>
    </location>
</feature>
<feature type="glycosylation site" description="N-linked (GlcNAc...) asparagine; by host" evidence="2">
    <location>
        <position position="435"/>
    </location>
</feature>
<feature type="glycosylation site" description="N-linked (GlcNAc...) asparagine; by host" evidence="2">
    <location>
        <position position="582"/>
    </location>
</feature>
<feature type="glycosylation site" description="N-linked (GlcNAc...) asparagine; by host" evidence="2">
    <location>
        <position position="677"/>
    </location>
</feature>
<feature type="glycosylation site" description="N-linked (GlcNAc...) asparagine; by host" evidence="2">
    <location>
        <position position="709"/>
    </location>
</feature>
<feature type="glycosylation site" description="N-linked (GlcNAc...) asparagine; by host" evidence="2">
    <location>
        <position position="717"/>
    </location>
</feature>
<feature type="glycosylation site" description="N-linked (GlcNAc...) asparagine; by host" evidence="2">
    <location>
        <position position="740"/>
    </location>
</feature>
<feature type="glycosylation site" description="N-linked (GlcNAc...) asparagine; by host" evidence="2">
    <location>
        <position position="789"/>
    </location>
</feature>
<feature type="glycosylation site" description="N-linked (GlcNAc...) asparagine; by host" evidence="2">
    <location>
        <position position="806"/>
    </location>
</feature>
<feature type="glycosylation site" description="N-linked (GlcNAc...) asparagine; by host" evidence="2">
    <location>
        <position position="945"/>
    </location>
</feature>
<feature type="glycosylation site" description="N-linked (GlcNAc...) asparagine; by host" evidence="2">
    <location>
        <position position="1232"/>
    </location>
</feature>
<feature type="glycosylation site" description="N-linked (GlcNAc...) asparagine; by host" evidence="2">
    <location>
        <position position="1242"/>
    </location>
</feature>
<feature type="glycosylation site" description="N-linked (GlcNAc...) asparagine; by host" evidence="2">
    <location>
        <position position="1261"/>
    </location>
</feature>
<feature type="glycosylation site" description="N-linked (GlcNAc...) asparagine; by host" evidence="2">
    <location>
        <position position="1277"/>
    </location>
</feature>
<feature type="glycosylation site" description="N-linked (GlcNAc...) asparagine; by host" evidence="2">
    <location>
        <position position="1298"/>
    </location>
</feature>
<feature type="disulfide bond" evidence="4">
    <location>
        <begin position="21"/>
        <end position="158"/>
    </location>
</feature>
<feature type="disulfide bond" evidence="4">
    <location>
        <begin position="153"/>
        <end position="187"/>
    </location>
</feature>
<feature type="disulfide bond" evidence="4">
    <location>
        <begin position="165"/>
        <end position="246"/>
    </location>
</feature>
<feature type="disulfide bond" evidence="4">
    <location>
        <begin position="284"/>
        <end position="294"/>
    </location>
</feature>
<feature type="disulfide bond" evidence="3">
    <location>
        <begin position="329"/>
        <end position="354"/>
    </location>
</feature>
<feature type="disulfide bond" evidence="3">
    <location>
        <begin position="372"/>
        <end position="425"/>
    </location>
</feature>
<feature type="disulfide bond" evidence="3">
    <location>
        <begin position="384"/>
        <end position="616"/>
    </location>
</feature>
<feature type="disulfide bond" evidence="2">
    <location>
        <begin position="946"/>
        <end position="957"/>
    </location>
</feature>
<reference key="1">
    <citation type="journal article" date="1989" name="Virology">
        <title>Sequence analysis reveals extensive polymorphism and evidence of deletions within the E2 glycoprotein gene of several strains of murine hepatitis virus.</title>
        <authorList>
            <person name="Parker S.E."/>
            <person name="Gallagher T.M."/>
            <person name="Buchmeier M.J."/>
        </authorList>
    </citation>
    <scope>NUCLEOTIDE SEQUENCE [GENOMIC RNA]</scope>
</reference>
<reference key="2">
    <citation type="journal article" date="1990" name="Adv. Exp. Med. Biol.">
        <title>RNA sequence analysis of the E2 genes of wildtype and neuroattenuated mutants of MHV-4 reveals a hypervariable domain.</title>
        <authorList>
            <person name="Parker S.E."/>
            <person name="Buchmeier M.J."/>
        </authorList>
    </citation>
    <scope>NUCLEOTIDE SEQUENCE [GENOMIC RNA]</scope>
</reference>
<reference key="3">
    <citation type="journal article" date="1997" name="Virology">
        <title>Entry of mouse hepatitis virus into cells by endosomal and nonendosomal pathways.</title>
        <authorList>
            <person name="Nash T.C."/>
            <person name="Buchmeier M.J."/>
        </authorList>
    </citation>
    <scope>FUNCTION</scope>
</reference>
<sequence>MLFVFILLLPSCLGYIGDFRCIQTVNYNGNNASAPSISTEAVDVSKGLGTYYVLDRVYLNATLLLTGYYPVDGSNYRNLALTGTNTLSLTWFKPPFLSEFNDGIFAKVQNLKTNTPTGATSYFPTIVIGSLFGNTSYTVVLEPYNNIIMASVCTYTICQLPYTPCKPNTNGNRVIGFWHTDVKPPICLLKRNFTFNVNAPWLYFHFYQQGGTFYAYYADKPSATTFLFSVYIGDILTQYFVLPFICTPTAGSTLLPLYWVTPLLKRQYLFNFNEKGVITSAVDCASSYISEIKCKTQSLLPSTGVYDLSGYTVQPVGVVYRRVPNLPDCKIEEWLTAKSVPSPLNWERRTFQNCNFNLSSLLRYVQAESLSCNNIDASKVYGMCFGSVSVDKFAIPRSRQIDLQIGNSGFLQTANYKIDTAATSCQLYYSLPKNNVTINNYNPSSWNRRYGFNDAGVFGKSKHDVAYAQQCFTVRPSYCPCAQPDIVSACTSQTKPMSAYCPTGTIHRECSLWNGPHLRSARVGSGTYTCECTCKPNPFDTYDLRCGQIKTIVNVGDHCEGLGVLEDKCGNSDPHKGCSCANDSFIGWSHDTCLVNDRCQIFANILLNGINSGTTCSTDLQLPNTEVATGVCVRYDLYGITGQGVFKEVKADYYNSWQALLYDVNGNLNGFRDLTTNKTYTIRSCYSGRVSAAYHKEAPEPALLYRNINCSYVFTNNISREENPLNYFDSYLGCVVNADNRTDEALPNCDLRMGAGLCVDYSKSRRARRSVSTGYRLTTFEPYMPMLVNDSVQSVGGLYEMQIPTNFTIGHHEEFIQIRAPKVTIDCAAFVCGDNAACRQQLVEYGSFCDNVNAILNEVNNLLDNMQLQVASALMQGVTISSRLPDGISGPIDDINFSPLLGCIGSTCAEDGNGPSAIRGRSAIEDLLFDKVKLSDVGFVEAYNNCTGGQEVRDLLCVQSFNGIKVLPPVLSESQISGYTAGATAAAMFPPWTAAAGVPFSLNVQYRINGLGVTMNVLSENQKMIASAFNNALGAIQEGFDATNSALGKIQSVVNANAEALNNLLNQLSNRFGAISASLQEILTRLDAVEAKAQIDRLINGRLTALNAYISKQLSDSTLIKFSAAQAIEKVNECVKSQTTRINFCGNGNHILSLVQNAPYGLCFIHFSYVPTSFKTANVSPGLCISGDRGLAPKAGYFVQDNGEWKFTGSNYYYPEPITDKNSVVMISCAVNYTKAPEVFLNNSIPNLPDFKEELDKWFKNQTSIAPDLSLDFEKLNVTFLDLTYEMNRIQDAIKKLNESYINLKEVGTYEMYVKWPWYVWLLIGLAGVAVCVLLFFICCCTGCGSCCFRKCGSCCDEYGGHQDSIVIHNISAHED</sequence>
<keyword id="KW-0175">Coiled coil</keyword>
<keyword id="KW-1015">Disulfide bond</keyword>
<keyword id="KW-1170">Fusion of virus membrane with host endosomal membrane</keyword>
<keyword id="KW-1168">Fusion of virus membrane with host membrane</keyword>
<keyword id="KW-0325">Glycoprotein</keyword>
<keyword id="KW-1032">Host cell membrane</keyword>
<keyword id="KW-1043">Host membrane</keyword>
<keyword id="KW-0945">Host-virus interaction</keyword>
<keyword id="KW-0449">Lipoprotein</keyword>
<keyword id="KW-0472">Membrane</keyword>
<keyword id="KW-0564">Palmitate</keyword>
<keyword id="KW-0732">Signal</keyword>
<keyword id="KW-0812">Transmembrane</keyword>
<keyword id="KW-1133">Transmembrane helix</keyword>
<keyword id="KW-1161">Viral attachment to host cell</keyword>
<keyword id="KW-0261">Viral envelope protein</keyword>
<keyword id="KW-1162">Viral penetration into host cytoplasm</keyword>
<keyword id="KW-0946">Virion</keyword>
<keyword id="KW-0843">Virulence</keyword>
<keyword id="KW-1160">Virus entry into host cell</keyword>
<organism>
    <name type="scientific">Murine coronavirus (strain 4)</name>
    <name type="common">MHV-4</name>
    <name type="synonym">Murine hepatitis virus</name>
    <dbReference type="NCBI Taxonomy" id="12760"/>
    <lineage>
        <taxon>Viruses</taxon>
        <taxon>Riboviria</taxon>
        <taxon>Orthornavirae</taxon>
        <taxon>Pisuviricota</taxon>
        <taxon>Pisoniviricetes</taxon>
        <taxon>Nidovirales</taxon>
        <taxon>Cornidovirineae</taxon>
        <taxon>Coronaviridae</taxon>
        <taxon>Orthocoronavirinae</taxon>
        <taxon>Betacoronavirus</taxon>
        <taxon>Embecovirus</taxon>
        <taxon>Murine coronavirus</taxon>
    </lineage>
</organism>
<accession>P22432</accession>
<comment type="function">
    <molecule>Spike protein S1</molecule>
    <text evidence="2">Attaches the virion to the cell membrane by interacting with host receptor, initiating the infection.</text>
</comment>
<comment type="function">
    <molecule>Spike protein S2</molecule>
    <text evidence="2 5">Mediates fusion of the virion and cellular membranes by acting as a class I viral fusion protein. Under the current model, the protein has at least three conformational states: pre-fusion native state, pre-hairpin intermediate state, and post-fusion hairpin state. During viral and target cell membrane fusion, the coiled coil regions (heptad repeats) assume a trimer-of-hairpins structure, positioning the fusion peptide in close proximity to the C-terminal region of the ectodomain. The formation of this structure appears to drive apposition and subsequent fusion of viral and target cell membranes.</text>
</comment>
<comment type="function">
    <molecule>Spike protein S2'</molecule>
    <text evidence="2">Acts as a viral fusion peptide which is unmasked following S2 cleavage occurring upon virus endocytosis.</text>
</comment>
<comment type="subunit">
    <text evidence="2">Homotrimer; each monomer consists of a S1 and a S2 subunit. The resulting peplomers protrude from the virus surface as spikes.</text>
</comment>
<comment type="subcellular location">
    <subcellularLocation>
        <location evidence="2">Virion membrane</location>
        <topology evidence="2">Single-pass type I membrane protein</topology>
    </subcellularLocation>
    <subcellularLocation>
        <location evidence="2">Host endoplasmic reticulum-Golgi intermediate compartment membrane</location>
        <topology evidence="2">Single-pass type I membrane protein</topology>
    </subcellularLocation>
    <subcellularLocation>
        <location evidence="2">Host cell membrane</location>
        <topology evidence="2">Single-pass type I membrane protein</topology>
    </subcellularLocation>
    <text evidence="2">Accumulates in the endoplasmic reticulum-Golgi intermediate compartment, where it participates in virus particle assembly. Some S oligomers are transported to the host plasma membrane, where they may mediate cell-cell fusion.</text>
</comment>
<comment type="domain">
    <text evidence="2">Fusion peptide 1 (FP1) and fusion peptide 2 (FP2) function cooperatively and have a membrane-ordering effect on lipid headgroups and shallow hydrophobic regions of target bilayers. They are considered as two domains of an extended, bipartite FP. The membrane-ordering activity is calcium-dependent and also dependent on correct folding, which is maintained by an internal disulfide bond in FP2.</text>
</comment>
<comment type="PTM">
    <text evidence="2">Specific enzymatic cleavages in vivo yield mature proteins. The precursor is processed into S1 and S2 by host cell furin or another cellular protease to yield the mature S1 and S2 proteins. Additionally, a second cleavage leads to the release of a fusion peptide after viral attachment to host cell receptor.</text>
</comment>
<comment type="PTM">
    <text evidence="2">The cytoplasmic Cys-rich domain is palmitoylated. Spike glycoprotein is digested within host endosomes.</text>
</comment>
<comment type="miscellaneous">
    <text evidence="1">The viral fusion process requires lipid rafts of the host plasma membrane (By similarity). This strain is apparently capable of entering cells either through direct fusion at the cell surface or through endocytosis.</text>
</comment>
<comment type="similarity">
    <text evidence="2">Belongs to the betacoronaviruses spike protein family.</text>
</comment>
<organismHost>
    <name type="scientific">Mus musculus</name>
    <name type="common">Mouse</name>
    <dbReference type="NCBI Taxonomy" id="10090"/>
</organismHost>
<evidence type="ECO:0000250" key="1"/>
<evidence type="ECO:0000255" key="2">
    <source>
        <dbReference type="HAMAP-Rule" id="MF_04099"/>
    </source>
</evidence>
<evidence type="ECO:0000255" key="3">
    <source>
        <dbReference type="PROSITE-ProRule" id="PRU01269"/>
    </source>
</evidence>
<evidence type="ECO:0000255" key="4">
    <source>
        <dbReference type="PROSITE-ProRule" id="PRU01270"/>
    </source>
</evidence>
<evidence type="ECO:0000269" key="5">
    <source>
    </source>
</evidence>